<organism>
    <name type="scientific">Pseudomonas syringae pv. syringae (strain B728a)</name>
    <dbReference type="NCBI Taxonomy" id="205918"/>
    <lineage>
        <taxon>Bacteria</taxon>
        <taxon>Pseudomonadati</taxon>
        <taxon>Pseudomonadota</taxon>
        <taxon>Gammaproteobacteria</taxon>
        <taxon>Pseudomonadales</taxon>
        <taxon>Pseudomonadaceae</taxon>
        <taxon>Pseudomonas</taxon>
        <taxon>Pseudomonas syringae</taxon>
    </lineage>
</organism>
<protein>
    <recommendedName>
        <fullName evidence="1">Enolase 1</fullName>
        <ecNumber evidence="1">4.2.1.11</ecNumber>
    </recommendedName>
    <alternativeName>
        <fullName evidence="1">2-phospho-D-glycerate hydro-lyase 1</fullName>
    </alternativeName>
    <alternativeName>
        <fullName evidence="1">2-phosphoglycerate dehydratase 1</fullName>
    </alternativeName>
</protein>
<keyword id="KW-0963">Cytoplasm</keyword>
<keyword id="KW-0324">Glycolysis</keyword>
<keyword id="KW-0456">Lyase</keyword>
<keyword id="KW-0460">Magnesium</keyword>
<keyword id="KW-0479">Metal-binding</keyword>
<keyword id="KW-0964">Secreted</keyword>
<feature type="chain" id="PRO_0000267079" description="Enolase 1">
    <location>
        <begin position="1"/>
        <end position="428"/>
    </location>
</feature>
<feature type="active site" description="Proton donor" evidence="1">
    <location>
        <position position="209"/>
    </location>
</feature>
<feature type="active site" description="Proton acceptor" evidence="1">
    <location>
        <position position="340"/>
    </location>
</feature>
<feature type="binding site" evidence="1">
    <location>
        <position position="167"/>
    </location>
    <ligand>
        <name>(2R)-2-phosphoglycerate</name>
        <dbReference type="ChEBI" id="CHEBI:58289"/>
    </ligand>
</feature>
<feature type="binding site" evidence="1">
    <location>
        <position position="246"/>
    </location>
    <ligand>
        <name>Mg(2+)</name>
        <dbReference type="ChEBI" id="CHEBI:18420"/>
    </ligand>
</feature>
<feature type="binding site" evidence="1">
    <location>
        <position position="288"/>
    </location>
    <ligand>
        <name>Mg(2+)</name>
        <dbReference type="ChEBI" id="CHEBI:18420"/>
    </ligand>
</feature>
<feature type="binding site" evidence="1">
    <location>
        <position position="315"/>
    </location>
    <ligand>
        <name>Mg(2+)</name>
        <dbReference type="ChEBI" id="CHEBI:18420"/>
    </ligand>
</feature>
<feature type="binding site" evidence="1">
    <location>
        <position position="340"/>
    </location>
    <ligand>
        <name>(2R)-2-phosphoglycerate</name>
        <dbReference type="ChEBI" id="CHEBI:58289"/>
    </ligand>
</feature>
<feature type="binding site" evidence="1">
    <location>
        <position position="369"/>
    </location>
    <ligand>
        <name>(2R)-2-phosphoglycerate</name>
        <dbReference type="ChEBI" id="CHEBI:58289"/>
    </ligand>
</feature>
<feature type="binding site" evidence="1">
    <location>
        <position position="370"/>
    </location>
    <ligand>
        <name>(2R)-2-phosphoglycerate</name>
        <dbReference type="ChEBI" id="CHEBI:58289"/>
    </ligand>
</feature>
<feature type="binding site" evidence="1">
    <location>
        <position position="391"/>
    </location>
    <ligand>
        <name>(2R)-2-phosphoglycerate</name>
        <dbReference type="ChEBI" id="CHEBI:58289"/>
    </ligand>
</feature>
<evidence type="ECO:0000255" key="1">
    <source>
        <dbReference type="HAMAP-Rule" id="MF_00318"/>
    </source>
</evidence>
<sequence>MAKIVDIKGREVLDSRGNPTVEADVLLDNGIIGSACAPSGASTGSREALELRDGDKSRYMGKGVLKAVANINGPIRDLLLGKDPVDQKALDHAMIELDGTENKASLGANAILAVSLAAAKAAAQDQDLPLYAHIANLNGTPGVYSMPVPMMNIINGGEHADNNIDIQEFMIQPVGAKSFAEGLRWGTEIFHHLKAVLKARGLNTAVGDEGGFAPNLASNKEALDAIAEAVANAGYTLGTDVTLALDCAASEFYKNGKYKLSEEGEYSSAEFAEYLAELTRKHPIISIEDGLDESDWDGWKILTDKIGEKTQLVGDDLFVTNTKILKEGIDKKIANSILIKFNQIGTLTETLEAIQMAKAAGYTAIISHRSGETEDSTIADLAVGTSAGQIKTGSLCRSDRVSKYNQLLRIEEQLGSKAVYRGRAEFRG</sequence>
<accession>Q4ZWQ8</accession>
<name>ENO1_PSEU2</name>
<proteinExistence type="inferred from homology"/>
<gene>
    <name evidence="1" type="primary">eno1</name>
    <name type="ordered locus">Psyr_1363</name>
</gene>
<dbReference type="EC" id="4.2.1.11" evidence="1"/>
<dbReference type="EMBL" id="CP000075">
    <property type="protein sequence ID" value="AAY36414.1"/>
    <property type="molecule type" value="Genomic_DNA"/>
</dbReference>
<dbReference type="RefSeq" id="YP_234452.1">
    <property type="nucleotide sequence ID" value="NC_007005.1"/>
</dbReference>
<dbReference type="SMR" id="Q4ZWQ8"/>
<dbReference type="STRING" id="205918.Psyr_1363"/>
<dbReference type="KEGG" id="psb:Psyr_1363"/>
<dbReference type="PATRIC" id="fig|205918.7.peg.1396"/>
<dbReference type="eggNOG" id="COG0148">
    <property type="taxonomic scope" value="Bacteria"/>
</dbReference>
<dbReference type="HOGENOM" id="CLU_031223_2_1_6"/>
<dbReference type="OrthoDB" id="9804716at2"/>
<dbReference type="UniPathway" id="UPA00109">
    <property type="reaction ID" value="UER00187"/>
</dbReference>
<dbReference type="Proteomes" id="UP000000426">
    <property type="component" value="Chromosome"/>
</dbReference>
<dbReference type="GO" id="GO:0009986">
    <property type="term" value="C:cell surface"/>
    <property type="evidence" value="ECO:0007669"/>
    <property type="project" value="UniProtKB-SubCell"/>
</dbReference>
<dbReference type="GO" id="GO:0005576">
    <property type="term" value="C:extracellular region"/>
    <property type="evidence" value="ECO:0007669"/>
    <property type="project" value="UniProtKB-SubCell"/>
</dbReference>
<dbReference type="GO" id="GO:0000015">
    <property type="term" value="C:phosphopyruvate hydratase complex"/>
    <property type="evidence" value="ECO:0007669"/>
    <property type="project" value="InterPro"/>
</dbReference>
<dbReference type="GO" id="GO:0000287">
    <property type="term" value="F:magnesium ion binding"/>
    <property type="evidence" value="ECO:0007669"/>
    <property type="project" value="UniProtKB-UniRule"/>
</dbReference>
<dbReference type="GO" id="GO:0004634">
    <property type="term" value="F:phosphopyruvate hydratase activity"/>
    <property type="evidence" value="ECO:0007669"/>
    <property type="project" value="UniProtKB-UniRule"/>
</dbReference>
<dbReference type="GO" id="GO:0006096">
    <property type="term" value="P:glycolytic process"/>
    <property type="evidence" value="ECO:0007669"/>
    <property type="project" value="UniProtKB-UniRule"/>
</dbReference>
<dbReference type="CDD" id="cd03313">
    <property type="entry name" value="enolase"/>
    <property type="match status" value="1"/>
</dbReference>
<dbReference type="FunFam" id="3.20.20.120:FF:000001">
    <property type="entry name" value="Enolase"/>
    <property type="match status" value="1"/>
</dbReference>
<dbReference type="FunFam" id="3.30.390.10:FF:000001">
    <property type="entry name" value="Enolase"/>
    <property type="match status" value="1"/>
</dbReference>
<dbReference type="Gene3D" id="3.20.20.120">
    <property type="entry name" value="Enolase-like C-terminal domain"/>
    <property type="match status" value="1"/>
</dbReference>
<dbReference type="Gene3D" id="3.30.390.10">
    <property type="entry name" value="Enolase-like, N-terminal domain"/>
    <property type="match status" value="1"/>
</dbReference>
<dbReference type="HAMAP" id="MF_00318">
    <property type="entry name" value="Enolase"/>
    <property type="match status" value="1"/>
</dbReference>
<dbReference type="InterPro" id="IPR000941">
    <property type="entry name" value="Enolase"/>
</dbReference>
<dbReference type="InterPro" id="IPR036849">
    <property type="entry name" value="Enolase-like_C_sf"/>
</dbReference>
<dbReference type="InterPro" id="IPR029017">
    <property type="entry name" value="Enolase-like_N"/>
</dbReference>
<dbReference type="InterPro" id="IPR020810">
    <property type="entry name" value="Enolase_C"/>
</dbReference>
<dbReference type="InterPro" id="IPR020809">
    <property type="entry name" value="Enolase_CS"/>
</dbReference>
<dbReference type="InterPro" id="IPR020811">
    <property type="entry name" value="Enolase_N"/>
</dbReference>
<dbReference type="NCBIfam" id="TIGR01060">
    <property type="entry name" value="eno"/>
    <property type="match status" value="1"/>
</dbReference>
<dbReference type="PANTHER" id="PTHR11902">
    <property type="entry name" value="ENOLASE"/>
    <property type="match status" value="1"/>
</dbReference>
<dbReference type="PANTHER" id="PTHR11902:SF1">
    <property type="entry name" value="ENOLASE"/>
    <property type="match status" value="1"/>
</dbReference>
<dbReference type="Pfam" id="PF00113">
    <property type="entry name" value="Enolase_C"/>
    <property type="match status" value="1"/>
</dbReference>
<dbReference type="Pfam" id="PF03952">
    <property type="entry name" value="Enolase_N"/>
    <property type="match status" value="1"/>
</dbReference>
<dbReference type="PIRSF" id="PIRSF001400">
    <property type="entry name" value="Enolase"/>
    <property type="match status" value="1"/>
</dbReference>
<dbReference type="PRINTS" id="PR00148">
    <property type="entry name" value="ENOLASE"/>
</dbReference>
<dbReference type="SFLD" id="SFLDF00002">
    <property type="entry name" value="enolase"/>
    <property type="match status" value="1"/>
</dbReference>
<dbReference type="SFLD" id="SFLDG00178">
    <property type="entry name" value="enolase"/>
    <property type="match status" value="1"/>
</dbReference>
<dbReference type="SMART" id="SM01192">
    <property type="entry name" value="Enolase_C"/>
    <property type="match status" value="1"/>
</dbReference>
<dbReference type="SMART" id="SM01193">
    <property type="entry name" value="Enolase_N"/>
    <property type="match status" value="1"/>
</dbReference>
<dbReference type="SUPFAM" id="SSF51604">
    <property type="entry name" value="Enolase C-terminal domain-like"/>
    <property type="match status" value="1"/>
</dbReference>
<dbReference type="SUPFAM" id="SSF54826">
    <property type="entry name" value="Enolase N-terminal domain-like"/>
    <property type="match status" value="1"/>
</dbReference>
<dbReference type="PROSITE" id="PS00164">
    <property type="entry name" value="ENOLASE"/>
    <property type="match status" value="1"/>
</dbReference>
<comment type="function">
    <text evidence="1">Catalyzes the reversible conversion of 2-phosphoglycerate (2-PG) into phosphoenolpyruvate (PEP). It is essential for the degradation of carbohydrates via glycolysis.</text>
</comment>
<comment type="catalytic activity">
    <reaction evidence="1">
        <text>(2R)-2-phosphoglycerate = phosphoenolpyruvate + H2O</text>
        <dbReference type="Rhea" id="RHEA:10164"/>
        <dbReference type="ChEBI" id="CHEBI:15377"/>
        <dbReference type="ChEBI" id="CHEBI:58289"/>
        <dbReference type="ChEBI" id="CHEBI:58702"/>
        <dbReference type="EC" id="4.2.1.11"/>
    </reaction>
</comment>
<comment type="cofactor">
    <cofactor evidence="1">
        <name>Mg(2+)</name>
        <dbReference type="ChEBI" id="CHEBI:18420"/>
    </cofactor>
    <text evidence="1">Binds a second Mg(2+) ion via substrate during catalysis.</text>
</comment>
<comment type="pathway">
    <text evidence="1">Carbohydrate degradation; glycolysis; pyruvate from D-glyceraldehyde 3-phosphate: step 4/5.</text>
</comment>
<comment type="subunit">
    <text evidence="1">Component of the RNA degradosome, a multiprotein complex involved in RNA processing and mRNA degradation.</text>
</comment>
<comment type="subcellular location">
    <subcellularLocation>
        <location evidence="1">Cytoplasm</location>
    </subcellularLocation>
    <subcellularLocation>
        <location evidence="1">Secreted</location>
    </subcellularLocation>
    <subcellularLocation>
        <location evidence="1">Cell surface</location>
    </subcellularLocation>
    <text evidence="1">Fractions of enolase are present in both the cytoplasm and on the cell surface.</text>
</comment>
<comment type="similarity">
    <text evidence="1">Belongs to the enolase family.</text>
</comment>
<reference key="1">
    <citation type="journal article" date="2005" name="Proc. Natl. Acad. Sci. U.S.A.">
        <title>Comparison of the complete genome sequences of Pseudomonas syringae pv. syringae B728a and pv. tomato DC3000.</title>
        <authorList>
            <person name="Feil H."/>
            <person name="Feil W.S."/>
            <person name="Chain P."/>
            <person name="Larimer F."/>
            <person name="Dibartolo G."/>
            <person name="Copeland A."/>
            <person name="Lykidis A."/>
            <person name="Trong S."/>
            <person name="Nolan M."/>
            <person name="Goltsman E."/>
            <person name="Thiel J."/>
            <person name="Malfatti S."/>
            <person name="Loper J.E."/>
            <person name="Lapidus A."/>
            <person name="Detter J.C."/>
            <person name="Land M."/>
            <person name="Richardson P.M."/>
            <person name="Kyrpides N.C."/>
            <person name="Ivanova N."/>
            <person name="Lindow S.E."/>
        </authorList>
    </citation>
    <scope>NUCLEOTIDE SEQUENCE [LARGE SCALE GENOMIC DNA]</scope>
    <source>
        <strain>B728a</strain>
    </source>
</reference>